<dbReference type="EMBL" id="AL766843">
    <property type="protein sequence ID" value="CAD45719.1"/>
    <property type="molecule type" value="Genomic_DNA"/>
</dbReference>
<dbReference type="RefSeq" id="WP_001865622.1">
    <property type="nucleotide sequence ID" value="NC_004368.1"/>
</dbReference>
<dbReference type="SMR" id="Q8E7S5"/>
<dbReference type="GeneID" id="66885034"/>
<dbReference type="KEGG" id="san:rplR"/>
<dbReference type="eggNOG" id="COG0256">
    <property type="taxonomic scope" value="Bacteria"/>
</dbReference>
<dbReference type="HOGENOM" id="CLU_098841_0_1_9"/>
<dbReference type="Proteomes" id="UP000000823">
    <property type="component" value="Chromosome"/>
</dbReference>
<dbReference type="GO" id="GO:0022625">
    <property type="term" value="C:cytosolic large ribosomal subunit"/>
    <property type="evidence" value="ECO:0007669"/>
    <property type="project" value="TreeGrafter"/>
</dbReference>
<dbReference type="GO" id="GO:0008097">
    <property type="term" value="F:5S rRNA binding"/>
    <property type="evidence" value="ECO:0007669"/>
    <property type="project" value="TreeGrafter"/>
</dbReference>
<dbReference type="GO" id="GO:0003735">
    <property type="term" value="F:structural constituent of ribosome"/>
    <property type="evidence" value="ECO:0007669"/>
    <property type="project" value="InterPro"/>
</dbReference>
<dbReference type="GO" id="GO:0006412">
    <property type="term" value="P:translation"/>
    <property type="evidence" value="ECO:0007669"/>
    <property type="project" value="UniProtKB-UniRule"/>
</dbReference>
<dbReference type="CDD" id="cd00432">
    <property type="entry name" value="Ribosomal_L18_L5e"/>
    <property type="match status" value="1"/>
</dbReference>
<dbReference type="FunFam" id="3.30.420.100:FF:000001">
    <property type="entry name" value="50S ribosomal protein L18"/>
    <property type="match status" value="1"/>
</dbReference>
<dbReference type="Gene3D" id="3.30.420.100">
    <property type="match status" value="1"/>
</dbReference>
<dbReference type="HAMAP" id="MF_01337_B">
    <property type="entry name" value="Ribosomal_uL18_B"/>
    <property type="match status" value="1"/>
</dbReference>
<dbReference type="InterPro" id="IPR004389">
    <property type="entry name" value="Ribosomal_uL18_bac-type"/>
</dbReference>
<dbReference type="InterPro" id="IPR005484">
    <property type="entry name" value="Ribosomal_uL18_bac/euk"/>
</dbReference>
<dbReference type="NCBIfam" id="TIGR00060">
    <property type="entry name" value="L18_bact"/>
    <property type="match status" value="1"/>
</dbReference>
<dbReference type="PANTHER" id="PTHR12899">
    <property type="entry name" value="39S RIBOSOMAL PROTEIN L18, MITOCHONDRIAL"/>
    <property type="match status" value="1"/>
</dbReference>
<dbReference type="PANTHER" id="PTHR12899:SF3">
    <property type="entry name" value="LARGE RIBOSOMAL SUBUNIT PROTEIN UL18M"/>
    <property type="match status" value="1"/>
</dbReference>
<dbReference type="Pfam" id="PF00861">
    <property type="entry name" value="Ribosomal_L18p"/>
    <property type="match status" value="1"/>
</dbReference>
<dbReference type="SUPFAM" id="SSF53137">
    <property type="entry name" value="Translational machinery components"/>
    <property type="match status" value="1"/>
</dbReference>
<accession>Q8E7S5</accession>
<name>RL18_STRA3</name>
<proteinExistence type="inferred from homology"/>
<gene>
    <name evidence="1" type="primary">rplR</name>
    <name type="ordered locus">gbs0074</name>
</gene>
<comment type="function">
    <text evidence="1">This is one of the proteins that bind and probably mediate the attachment of the 5S RNA into the large ribosomal subunit, where it forms part of the central protuberance.</text>
</comment>
<comment type="subunit">
    <text evidence="1">Part of the 50S ribosomal subunit; part of the 5S rRNA/L5/L18/L25 subcomplex. Contacts the 5S and 23S rRNAs.</text>
</comment>
<comment type="similarity">
    <text evidence="1">Belongs to the universal ribosomal protein uL18 family.</text>
</comment>
<evidence type="ECO:0000255" key="1">
    <source>
        <dbReference type="HAMAP-Rule" id="MF_01337"/>
    </source>
</evidence>
<evidence type="ECO:0000256" key="2">
    <source>
        <dbReference type="SAM" id="MobiDB-lite"/>
    </source>
</evidence>
<evidence type="ECO:0000305" key="3"/>
<sequence>MISKPDKNKIRQKRHRRVRGKLSGTADRPRLNIFRSNTGIYAQVIDDVAGVTLASASTLDKEVSNGTKTEQAVVVGKLVAERAVAKGISEVVFDRGGYLYHGRVKALADSARENGLKF</sequence>
<protein>
    <recommendedName>
        <fullName evidence="1">Large ribosomal subunit protein uL18</fullName>
    </recommendedName>
    <alternativeName>
        <fullName evidence="3">50S ribosomal protein L18</fullName>
    </alternativeName>
</protein>
<organism>
    <name type="scientific">Streptococcus agalactiae serotype III (strain NEM316)</name>
    <dbReference type="NCBI Taxonomy" id="211110"/>
    <lineage>
        <taxon>Bacteria</taxon>
        <taxon>Bacillati</taxon>
        <taxon>Bacillota</taxon>
        <taxon>Bacilli</taxon>
        <taxon>Lactobacillales</taxon>
        <taxon>Streptococcaceae</taxon>
        <taxon>Streptococcus</taxon>
    </lineage>
</organism>
<feature type="chain" id="PRO_0000131352" description="Large ribosomal subunit protein uL18">
    <location>
        <begin position="1"/>
        <end position="118"/>
    </location>
</feature>
<feature type="region of interest" description="Disordered" evidence="2">
    <location>
        <begin position="1"/>
        <end position="24"/>
    </location>
</feature>
<feature type="compositionally biased region" description="Basic residues" evidence="2">
    <location>
        <begin position="10"/>
        <end position="20"/>
    </location>
</feature>
<keyword id="KW-0687">Ribonucleoprotein</keyword>
<keyword id="KW-0689">Ribosomal protein</keyword>
<keyword id="KW-0694">RNA-binding</keyword>
<keyword id="KW-0699">rRNA-binding</keyword>
<reference key="1">
    <citation type="journal article" date="2002" name="Mol. Microbiol.">
        <title>Genome sequence of Streptococcus agalactiae, a pathogen causing invasive neonatal disease.</title>
        <authorList>
            <person name="Glaser P."/>
            <person name="Rusniok C."/>
            <person name="Buchrieser C."/>
            <person name="Chevalier F."/>
            <person name="Frangeul L."/>
            <person name="Msadek T."/>
            <person name="Zouine M."/>
            <person name="Couve E."/>
            <person name="Lalioui L."/>
            <person name="Poyart C."/>
            <person name="Trieu-Cuot P."/>
            <person name="Kunst F."/>
        </authorList>
    </citation>
    <scope>NUCLEOTIDE SEQUENCE [LARGE SCALE GENOMIC DNA]</scope>
    <source>
        <strain>NEM316</strain>
    </source>
</reference>